<protein>
    <recommendedName>
        <fullName evidence="4">Katanin p60 ATPase-containing subunit A-like 1</fullName>
        <shortName evidence="4">Katanin p60 subunit A-like 1</shortName>
        <ecNumber evidence="4">5.6.1.1</ecNumber>
    </recommendedName>
    <alternativeName>
        <fullName evidence="4">p60 katanin-like 1</fullName>
    </alternativeName>
</protein>
<organism>
    <name type="scientific">Danio rerio</name>
    <name type="common">Zebrafish</name>
    <name type="synonym">Brachydanio rerio</name>
    <dbReference type="NCBI Taxonomy" id="7955"/>
    <lineage>
        <taxon>Eukaryota</taxon>
        <taxon>Metazoa</taxon>
        <taxon>Chordata</taxon>
        <taxon>Craniata</taxon>
        <taxon>Vertebrata</taxon>
        <taxon>Euteleostomi</taxon>
        <taxon>Actinopterygii</taxon>
        <taxon>Neopterygii</taxon>
        <taxon>Teleostei</taxon>
        <taxon>Ostariophysi</taxon>
        <taxon>Cypriniformes</taxon>
        <taxon>Danionidae</taxon>
        <taxon>Danioninae</taxon>
        <taxon>Danio</taxon>
    </lineage>
</organism>
<sequence length="488" mass="54891">MNLTEICDNAKKGREYALLGNYDSSMVYYQGVIQQIHKHCQSLRDPAQKVKWQQVRQELAEEYEQVKSIVSTLESFKVDKAVDFPNPVPEEGPRDPDVWPPPTPAEHRGPVQVKKPVPLSKPQRKESPGMQHRGAVGRGQANIKPDRPNTRDGRGNKAKEEKSKRNAQEGAADVEQKKFDGTGYDSDLVDALERDIVSRNPNIHWDDIADLEDAKKLLREAVVLPMWMPDFFKGIRRPWKGVLMVGPPGTGKTMLAKAVATECGTTFFNVSSSTLTSKYRGESEKLVRLLFEMARFYAPTTIFIDEIDSICGRRGTSDEHEASRRVKSELLVQMDGVGGAQESEDPSKMVMVLAATNFPWDIDEALRRRLEKRIYIPLPTAKGRAELLKINLREVDVASDVDLTVFAEKIEGYSGADITNVCRDASMMAMRRRIQGLSPEEIRALSKDELQMPVTMEDFELALKKISKSVSAADLEKYESWMSEFGSV</sequence>
<reference key="1">
    <citation type="submission" date="2004-11" db="EMBL/GenBank/DDBJ databases">
        <authorList>
            <consortium name="NIH - Zebrafish Gene Collection (ZGC) project"/>
        </authorList>
    </citation>
    <scope>NUCLEOTIDE SEQUENCE [LARGE SCALE MRNA]</scope>
    <source>
        <tissue>Olfactory epithelium</tissue>
    </source>
</reference>
<comment type="function">
    <text evidence="1">Regulates microtubule dynamics in Sertoli cells, a process that is essential for spermiogenesis and male fertility. Severs microtubules in an ATP-dependent manner, promoting rapid reorganization of cellular microtubule arrays (By similarity).</text>
</comment>
<comment type="catalytic activity">
    <reaction evidence="4">
        <text>n ATP + n H2O + a microtubule = n ADP + n phosphate + (n+1) alpha/beta tubulin heterodimers.</text>
        <dbReference type="EC" id="5.6.1.1"/>
    </reaction>
</comment>
<comment type="subcellular location">
    <subcellularLocation>
        <location evidence="4">Cytoplasm</location>
        <location evidence="4">Cytoskeleton</location>
    </subcellularLocation>
    <subcellularLocation>
        <location evidence="3">Cytoplasm</location>
    </subcellularLocation>
    <subcellularLocation>
        <location evidence="3">Cytoplasm</location>
        <location evidence="3">Cytoskeleton</location>
        <location evidence="3">Spindle pole</location>
    </subcellularLocation>
    <subcellularLocation>
        <location evidence="3">Cytoplasm</location>
        <location evidence="3">Cytoskeleton</location>
        <location evidence="3">Spindle</location>
    </subcellularLocation>
    <text evidence="2 3">Colocalizes with microtubules throughout the basal and adluminal compartments of Sertoli cells (By similarity). Localizes within the cytoplasm, partially overlapping with microtubules, in interphase and to the mitotic spindle and spindle poles during mitosis (By similarity).</text>
</comment>
<comment type="similarity">
    <text evidence="4">Belongs to the AAA ATPase family. Katanin p60 subunit A1 subfamily. A-like 1 sub-subfamily.</text>
</comment>
<keyword id="KW-0067">ATP-binding</keyword>
<keyword id="KW-0963">Cytoplasm</keyword>
<keyword id="KW-0206">Cytoskeleton</keyword>
<keyword id="KW-0413">Isomerase</keyword>
<keyword id="KW-0493">Microtubule</keyword>
<keyword id="KW-0547">Nucleotide-binding</keyword>
<keyword id="KW-1185">Reference proteome</keyword>
<name>KATL1_DANRE</name>
<proteinExistence type="evidence at transcript level"/>
<gene>
    <name type="primary">katnal1</name>
    <name type="ORF">zgc:101696</name>
</gene>
<accession>Q5U3S1</accession>
<feature type="chain" id="PRO_0000358714" description="Katanin p60 ATPase-containing subunit A-like 1">
    <location>
        <begin position="1"/>
        <end position="488"/>
    </location>
</feature>
<feature type="region of interest" description="Disordered" evidence="5">
    <location>
        <begin position="84"/>
        <end position="184"/>
    </location>
</feature>
<feature type="compositionally biased region" description="Basic and acidic residues" evidence="5">
    <location>
        <begin position="144"/>
        <end position="167"/>
    </location>
</feature>
<feature type="binding site" evidence="4">
    <location>
        <begin position="246"/>
        <end position="253"/>
    </location>
    <ligand>
        <name>ATP</name>
        <dbReference type="ChEBI" id="CHEBI:30616"/>
    </ligand>
</feature>
<dbReference type="EC" id="5.6.1.1" evidence="4"/>
<dbReference type="EMBL" id="BC085416">
    <property type="protein sequence ID" value="AAH85416.1"/>
    <property type="molecule type" value="mRNA"/>
</dbReference>
<dbReference type="RefSeq" id="NP_001007432.1">
    <property type="nucleotide sequence ID" value="NM_001007431.1"/>
</dbReference>
<dbReference type="SMR" id="Q5U3S1"/>
<dbReference type="FunCoup" id="Q5U3S1">
    <property type="interactions" value="1344"/>
</dbReference>
<dbReference type="STRING" id="7955.ENSDARP00000131532"/>
<dbReference type="PaxDb" id="7955-ENSDARP00000005849"/>
<dbReference type="GeneID" id="492790"/>
<dbReference type="KEGG" id="dre:492790"/>
<dbReference type="AGR" id="ZFIN:ZDB-GENE-041114-141"/>
<dbReference type="CTD" id="84056"/>
<dbReference type="ZFIN" id="ZDB-GENE-041114-141">
    <property type="gene designation" value="katnal1"/>
</dbReference>
<dbReference type="eggNOG" id="KOG0738">
    <property type="taxonomic scope" value="Eukaryota"/>
</dbReference>
<dbReference type="InParanoid" id="Q5U3S1"/>
<dbReference type="OrthoDB" id="5334845at2759"/>
<dbReference type="PhylomeDB" id="Q5U3S1"/>
<dbReference type="PRO" id="PR:Q5U3S1"/>
<dbReference type="Proteomes" id="UP000000437">
    <property type="component" value="Chromosome 10"/>
</dbReference>
<dbReference type="GO" id="GO:0005813">
    <property type="term" value="C:centrosome"/>
    <property type="evidence" value="ECO:0007669"/>
    <property type="project" value="UniProtKB-UniRule"/>
</dbReference>
<dbReference type="GO" id="GO:0005737">
    <property type="term" value="C:cytoplasm"/>
    <property type="evidence" value="ECO:0000250"/>
    <property type="project" value="UniProtKB"/>
</dbReference>
<dbReference type="GO" id="GO:0005874">
    <property type="term" value="C:microtubule"/>
    <property type="evidence" value="ECO:0000250"/>
    <property type="project" value="UniProtKB"/>
</dbReference>
<dbReference type="GO" id="GO:0015630">
    <property type="term" value="C:microtubule cytoskeleton"/>
    <property type="evidence" value="ECO:0000318"/>
    <property type="project" value="GO_Central"/>
</dbReference>
<dbReference type="GO" id="GO:0005819">
    <property type="term" value="C:spindle"/>
    <property type="evidence" value="ECO:0000250"/>
    <property type="project" value="UniProtKB"/>
</dbReference>
<dbReference type="GO" id="GO:0000922">
    <property type="term" value="C:spindle pole"/>
    <property type="evidence" value="ECO:0000250"/>
    <property type="project" value="UniProtKB"/>
</dbReference>
<dbReference type="GO" id="GO:0005524">
    <property type="term" value="F:ATP binding"/>
    <property type="evidence" value="ECO:0007669"/>
    <property type="project" value="UniProtKB-KW"/>
</dbReference>
<dbReference type="GO" id="GO:0016887">
    <property type="term" value="F:ATP hydrolysis activity"/>
    <property type="evidence" value="ECO:0000318"/>
    <property type="project" value="GO_Central"/>
</dbReference>
<dbReference type="GO" id="GO:0008017">
    <property type="term" value="F:microtubule binding"/>
    <property type="evidence" value="ECO:0007669"/>
    <property type="project" value="UniProtKB-UniRule"/>
</dbReference>
<dbReference type="GO" id="GO:0008568">
    <property type="term" value="F:microtubule severing ATPase activity"/>
    <property type="evidence" value="ECO:0007669"/>
    <property type="project" value="UniProtKB-EC"/>
</dbReference>
<dbReference type="GO" id="GO:0009653">
    <property type="term" value="P:anatomical structure morphogenesis"/>
    <property type="evidence" value="ECO:0007669"/>
    <property type="project" value="UniProtKB-ARBA"/>
</dbReference>
<dbReference type="GO" id="GO:0051013">
    <property type="term" value="P:microtubule severing"/>
    <property type="evidence" value="ECO:0000318"/>
    <property type="project" value="GO_Central"/>
</dbReference>
<dbReference type="GO" id="GO:0007283">
    <property type="term" value="P:spermatogenesis"/>
    <property type="evidence" value="ECO:0007669"/>
    <property type="project" value="UniProtKB-UniRule"/>
</dbReference>
<dbReference type="CDD" id="cd21748">
    <property type="entry name" value="Kp60-NTD"/>
    <property type="match status" value="1"/>
</dbReference>
<dbReference type="CDD" id="cd19522">
    <property type="entry name" value="RecA-like_KTNA1"/>
    <property type="match status" value="1"/>
</dbReference>
<dbReference type="FunFam" id="1.10.8.60:FF:000025">
    <property type="entry name" value="Katanin p60 ATPase-containing subunit A1"/>
    <property type="match status" value="1"/>
</dbReference>
<dbReference type="FunFam" id="1.20.58.80:FF:000003">
    <property type="entry name" value="Katanin p60 ATPase-containing subunit A1"/>
    <property type="match status" value="1"/>
</dbReference>
<dbReference type="FunFam" id="3.40.50.300:FF:000159">
    <property type="entry name" value="Katanin p60 ATPase-containing subunit A1"/>
    <property type="match status" value="1"/>
</dbReference>
<dbReference type="Gene3D" id="1.10.8.60">
    <property type="match status" value="1"/>
</dbReference>
<dbReference type="Gene3D" id="3.40.50.300">
    <property type="entry name" value="P-loop containing nucleotide triphosphate hydrolases"/>
    <property type="match status" value="1"/>
</dbReference>
<dbReference type="Gene3D" id="1.20.58.80">
    <property type="entry name" value="Phosphotransferase system, lactose/cellobiose-type IIA subunit"/>
    <property type="match status" value="1"/>
</dbReference>
<dbReference type="HAMAP" id="MF_03023">
    <property type="entry name" value="Katanin_p60_A1"/>
    <property type="match status" value="1"/>
</dbReference>
<dbReference type="HAMAP" id="MF_03024">
    <property type="entry name" value="Katanin_p60_AL1"/>
    <property type="match status" value="1"/>
</dbReference>
<dbReference type="InterPro" id="IPR003593">
    <property type="entry name" value="AAA+_ATPase"/>
</dbReference>
<dbReference type="InterPro" id="IPR041569">
    <property type="entry name" value="AAA_lid_3"/>
</dbReference>
<dbReference type="InterPro" id="IPR003959">
    <property type="entry name" value="ATPase_AAA_core"/>
</dbReference>
<dbReference type="InterPro" id="IPR003960">
    <property type="entry name" value="ATPase_AAA_CS"/>
</dbReference>
<dbReference type="InterPro" id="IPR028596">
    <property type="entry name" value="KATNA1"/>
</dbReference>
<dbReference type="InterPro" id="IPR048611">
    <property type="entry name" value="KATNA1_MIT"/>
</dbReference>
<dbReference type="InterPro" id="IPR028594">
    <property type="entry name" value="Katnal1_chordates"/>
</dbReference>
<dbReference type="InterPro" id="IPR048612">
    <property type="entry name" value="KTNA1_AAA_dom"/>
</dbReference>
<dbReference type="InterPro" id="IPR050304">
    <property type="entry name" value="MT-severing_AAA_ATPase"/>
</dbReference>
<dbReference type="InterPro" id="IPR027417">
    <property type="entry name" value="P-loop_NTPase"/>
</dbReference>
<dbReference type="InterPro" id="IPR015415">
    <property type="entry name" value="Spast_Vps4_C"/>
</dbReference>
<dbReference type="PANTHER" id="PTHR23074">
    <property type="entry name" value="AAA DOMAIN-CONTAINING"/>
    <property type="match status" value="1"/>
</dbReference>
<dbReference type="PANTHER" id="PTHR23074:SF65">
    <property type="entry name" value="KATANIN P60 ATPASE-CONTAINING SUBUNIT A-LIKE 1"/>
    <property type="match status" value="1"/>
</dbReference>
<dbReference type="Pfam" id="PF00004">
    <property type="entry name" value="AAA"/>
    <property type="match status" value="1"/>
</dbReference>
<dbReference type="Pfam" id="PF17862">
    <property type="entry name" value="AAA_lid_3"/>
    <property type="match status" value="1"/>
</dbReference>
<dbReference type="Pfam" id="PF21126">
    <property type="entry name" value="KATNA1_MIT"/>
    <property type="match status" value="1"/>
</dbReference>
<dbReference type="Pfam" id="PF09336">
    <property type="entry name" value="Vps4_C"/>
    <property type="match status" value="1"/>
</dbReference>
<dbReference type="SMART" id="SM00382">
    <property type="entry name" value="AAA"/>
    <property type="match status" value="1"/>
</dbReference>
<dbReference type="SUPFAM" id="SSF52540">
    <property type="entry name" value="P-loop containing nucleoside triphosphate hydrolases"/>
    <property type="match status" value="1"/>
</dbReference>
<dbReference type="PROSITE" id="PS00674">
    <property type="entry name" value="AAA"/>
    <property type="match status" value="1"/>
</dbReference>
<evidence type="ECO:0000250" key="1"/>
<evidence type="ECO:0000250" key="2">
    <source>
        <dbReference type="UniProtKB" id="Q8K0T4"/>
    </source>
</evidence>
<evidence type="ECO:0000250" key="3">
    <source>
        <dbReference type="UniProtKB" id="Q9BW62"/>
    </source>
</evidence>
<evidence type="ECO:0000255" key="4">
    <source>
        <dbReference type="HAMAP-Rule" id="MF_03024"/>
    </source>
</evidence>
<evidence type="ECO:0000256" key="5">
    <source>
        <dbReference type="SAM" id="MobiDB-lite"/>
    </source>
</evidence>